<feature type="chain" id="PRO_1000093453" description="Peptide chain release factor 1">
    <location>
        <begin position="1"/>
        <end position="360"/>
    </location>
</feature>
<feature type="region of interest" description="Disordered" evidence="2">
    <location>
        <begin position="284"/>
        <end position="313"/>
    </location>
</feature>
<feature type="modified residue" description="N5-methylglutamine" evidence="1">
    <location>
        <position position="235"/>
    </location>
</feature>
<accession>B6I9S6</accession>
<sequence length="360" mass="40517">MKPSIVAKLEALHERHEEVQALLGDAQTIADQERFRALSREYAQLSDVSRCFTDWQQVQEDIETAQMMLDDPEMREMAQDELREAKEKSEQLEQQLQVLLLPKDPDDERNAFLEVRAGTGGDEAALFAGDLFRMYSRYAEARRWRVEIMSASEGEHGGYKEIIAKISGDGVYGRLKFESGGHRVQRVPATESQGRIHTSACTVAVMPELPDAELPDINPADLRIDTFRSSGAGGQHVNTTDSAIRITHLPTGIVVECQDERSQHKNKAKALSVLGARIHAAEMAKRQQAEASTRRNLLGSGDRSDRNRTYNFPQGRVTDHRINLTLYRLDEVMEGKLDMLIEPIIQEHQADQLAALSEQE</sequence>
<comment type="function">
    <text evidence="1">Peptide chain release factor 1 directs the termination of translation in response to the peptide chain termination codons UAG and UAA.</text>
</comment>
<comment type="subcellular location">
    <subcellularLocation>
        <location evidence="1">Cytoplasm</location>
    </subcellularLocation>
</comment>
<comment type="PTM">
    <text evidence="1">Methylated by PrmC. Methylation increases the termination efficiency of RF1.</text>
</comment>
<comment type="similarity">
    <text evidence="1">Belongs to the prokaryotic/mitochondrial release factor family.</text>
</comment>
<evidence type="ECO:0000255" key="1">
    <source>
        <dbReference type="HAMAP-Rule" id="MF_00093"/>
    </source>
</evidence>
<evidence type="ECO:0000256" key="2">
    <source>
        <dbReference type="SAM" id="MobiDB-lite"/>
    </source>
</evidence>
<reference key="1">
    <citation type="journal article" date="2008" name="DNA Res.">
        <title>Complete genome sequence and comparative analysis of the wild-type commensal Escherichia coli strain SE11 isolated from a healthy adult.</title>
        <authorList>
            <person name="Oshima K."/>
            <person name="Toh H."/>
            <person name="Ogura Y."/>
            <person name="Sasamoto H."/>
            <person name="Morita H."/>
            <person name="Park S.-H."/>
            <person name="Ooka T."/>
            <person name="Iyoda S."/>
            <person name="Taylor T.D."/>
            <person name="Hayashi T."/>
            <person name="Itoh K."/>
            <person name="Hattori M."/>
        </authorList>
    </citation>
    <scope>NUCLEOTIDE SEQUENCE [LARGE SCALE GENOMIC DNA]</scope>
    <source>
        <strain>SE11</strain>
    </source>
</reference>
<name>RF1_ECOSE</name>
<dbReference type="EMBL" id="AP009240">
    <property type="protein sequence ID" value="BAG76785.1"/>
    <property type="molecule type" value="Genomic_DNA"/>
</dbReference>
<dbReference type="RefSeq" id="WP_000804726.1">
    <property type="nucleotide sequence ID" value="NC_011415.1"/>
</dbReference>
<dbReference type="SMR" id="B6I9S6"/>
<dbReference type="GeneID" id="93775276"/>
<dbReference type="KEGG" id="ecy:ECSE_1261"/>
<dbReference type="HOGENOM" id="CLU_036856_0_1_6"/>
<dbReference type="Proteomes" id="UP000008199">
    <property type="component" value="Chromosome"/>
</dbReference>
<dbReference type="GO" id="GO:0005737">
    <property type="term" value="C:cytoplasm"/>
    <property type="evidence" value="ECO:0007669"/>
    <property type="project" value="UniProtKB-SubCell"/>
</dbReference>
<dbReference type="GO" id="GO:0016149">
    <property type="term" value="F:translation release factor activity, codon specific"/>
    <property type="evidence" value="ECO:0007669"/>
    <property type="project" value="UniProtKB-UniRule"/>
</dbReference>
<dbReference type="FunFam" id="3.30.160.20:FF:000004">
    <property type="entry name" value="Peptide chain release factor 1"/>
    <property type="match status" value="1"/>
</dbReference>
<dbReference type="FunFam" id="3.30.70.1660:FF:000002">
    <property type="entry name" value="Peptide chain release factor 1"/>
    <property type="match status" value="1"/>
</dbReference>
<dbReference type="FunFam" id="3.30.70.1660:FF:000004">
    <property type="entry name" value="Peptide chain release factor 1"/>
    <property type="match status" value="1"/>
</dbReference>
<dbReference type="Gene3D" id="3.30.160.20">
    <property type="match status" value="1"/>
</dbReference>
<dbReference type="Gene3D" id="3.30.70.1660">
    <property type="match status" value="1"/>
</dbReference>
<dbReference type="Gene3D" id="6.10.140.1950">
    <property type="match status" value="1"/>
</dbReference>
<dbReference type="HAMAP" id="MF_00093">
    <property type="entry name" value="Rel_fac_1"/>
    <property type="match status" value="1"/>
</dbReference>
<dbReference type="InterPro" id="IPR005139">
    <property type="entry name" value="PCRF"/>
</dbReference>
<dbReference type="InterPro" id="IPR000352">
    <property type="entry name" value="Pep_chain_release_fac_I"/>
</dbReference>
<dbReference type="InterPro" id="IPR045853">
    <property type="entry name" value="Pep_chain_release_fac_I_sf"/>
</dbReference>
<dbReference type="InterPro" id="IPR050057">
    <property type="entry name" value="Prokaryotic/Mito_RF"/>
</dbReference>
<dbReference type="InterPro" id="IPR004373">
    <property type="entry name" value="RF-1"/>
</dbReference>
<dbReference type="NCBIfam" id="TIGR00019">
    <property type="entry name" value="prfA"/>
    <property type="match status" value="1"/>
</dbReference>
<dbReference type="NCBIfam" id="NF001859">
    <property type="entry name" value="PRK00591.1"/>
    <property type="match status" value="1"/>
</dbReference>
<dbReference type="PANTHER" id="PTHR43804">
    <property type="entry name" value="LD18447P"/>
    <property type="match status" value="1"/>
</dbReference>
<dbReference type="PANTHER" id="PTHR43804:SF7">
    <property type="entry name" value="LD18447P"/>
    <property type="match status" value="1"/>
</dbReference>
<dbReference type="Pfam" id="PF03462">
    <property type="entry name" value="PCRF"/>
    <property type="match status" value="1"/>
</dbReference>
<dbReference type="Pfam" id="PF00472">
    <property type="entry name" value="RF-1"/>
    <property type="match status" value="1"/>
</dbReference>
<dbReference type="SMART" id="SM00937">
    <property type="entry name" value="PCRF"/>
    <property type="match status" value="1"/>
</dbReference>
<dbReference type="SUPFAM" id="SSF75620">
    <property type="entry name" value="Release factor"/>
    <property type="match status" value="1"/>
</dbReference>
<dbReference type="PROSITE" id="PS00745">
    <property type="entry name" value="RF_PROK_I"/>
    <property type="match status" value="1"/>
</dbReference>
<proteinExistence type="inferred from homology"/>
<organism>
    <name type="scientific">Escherichia coli (strain SE11)</name>
    <dbReference type="NCBI Taxonomy" id="409438"/>
    <lineage>
        <taxon>Bacteria</taxon>
        <taxon>Pseudomonadati</taxon>
        <taxon>Pseudomonadota</taxon>
        <taxon>Gammaproteobacteria</taxon>
        <taxon>Enterobacterales</taxon>
        <taxon>Enterobacteriaceae</taxon>
        <taxon>Escherichia</taxon>
    </lineage>
</organism>
<protein>
    <recommendedName>
        <fullName evidence="1">Peptide chain release factor 1</fullName>
        <shortName evidence="1">RF-1</shortName>
    </recommendedName>
</protein>
<gene>
    <name evidence="1" type="primary">prfA</name>
    <name type="ordered locus">ECSE_1261</name>
</gene>
<keyword id="KW-0963">Cytoplasm</keyword>
<keyword id="KW-0488">Methylation</keyword>
<keyword id="KW-0648">Protein biosynthesis</keyword>